<dbReference type="EC" id="2.3.1.275" evidence="1"/>
<dbReference type="EMBL" id="CP000157">
    <property type="protein sequence ID" value="ABC63051.1"/>
    <property type="molecule type" value="Genomic_DNA"/>
</dbReference>
<dbReference type="RefSeq" id="WP_011413887.1">
    <property type="nucleotide sequence ID" value="NC_007722.1"/>
</dbReference>
<dbReference type="SMR" id="Q2NB90"/>
<dbReference type="STRING" id="314225.ELI_04795"/>
<dbReference type="KEGG" id="eli:ELI_04795"/>
<dbReference type="eggNOG" id="COG0344">
    <property type="taxonomic scope" value="Bacteria"/>
</dbReference>
<dbReference type="HOGENOM" id="CLU_081254_1_0_5"/>
<dbReference type="OrthoDB" id="9777124at2"/>
<dbReference type="UniPathway" id="UPA00085"/>
<dbReference type="Proteomes" id="UP000008808">
    <property type="component" value="Chromosome"/>
</dbReference>
<dbReference type="GO" id="GO:0005886">
    <property type="term" value="C:plasma membrane"/>
    <property type="evidence" value="ECO:0007669"/>
    <property type="project" value="UniProtKB-SubCell"/>
</dbReference>
<dbReference type="GO" id="GO:0043772">
    <property type="term" value="F:acyl-phosphate glycerol-3-phosphate acyltransferase activity"/>
    <property type="evidence" value="ECO:0007669"/>
    <property type="project" value="UniProtKB-UniRule"/>
</dbReference>
<dbReference type="GO" id="GO:0008654">
    <property type="term" value="P:phospholipid biosynthetic process"/>
    <property type="evidence" value="ECO:0007669"/>
    <property type="project" value="UniProtKB-UniRule"/>
</dbReference>
<dbReference type="HAMAP" id="MF_01043">
    <property type="entry name" value="PlsY"/>
    <property type="match status" value="1"/>
</dbReference>
<dbReference type="InterPro" id="IPR003811">
    <property type="entry name" value="G3P_acylTferase_PlsY"/>
</dbReference>
<dbReference type="NCBIfam" id="TIGR00023">
    <property type="entry name" value="glycerol-3-phosphate 1-O-acyltransferase PlsY"/>
    <property type="match status" value="1"/>
</dbReference>
<dbReference type="PANTHER" id="PTHR30309:SF0">
    <property type="entry name" value="GLYCEROL-3-PHOSPHATE ACYLTRANSFERASE-RELATED"/>
    <property type="match status" value="1"/>
</dbReference>
<dbReference type="PANTHER" id="PTHR30309">
    <property type="entry name" value="INNER MEMBRANE PROTEIN YGIH"/>
    <property type="match status" value="1"/>
</dbReference>
<dbReference type="Pfam" id="PF02660">
    <property type="entry name" value="G3P_acyltransf"/>
    <property type="match status" value="1"/>
</dbReference>
<dbReference type="SMART" id="SM01207">
    <property type="entry name" value="G3P_acyltransf"/>
    <property type="match status" value="1"/>
</dbReference>
<accession>Q2NB90</accession>
<proteinExistence type="inferred from homology"/>
<keyword id="KW-0997">Cell inner membrane</keyword>
<keyword id="KW-1003">Cell membrane</keyword>
<keyword id="KW-0444">Lipid biosynthesis</keyword>
<keyword id="KW-0443">Lipid metabolism</keyword>
<keyword id="KW-0472">Membrane</keyword>
<keyword id="KW-0594">Phospholipid biosynthesis</keyword>
<keyword id="KW-1208">Phospholipid metabolism</keyword>
<keyword id="KW-1185">Reference proteome</keyword>
<keyword id="KW-0808">Transferase</keyword>
<keyword id="KW-0812">Transmembrane</keyword>
<keyword id="KW-1133">Transmembrane helix</keyword>
<gene>
    <name evidence="1" type="primary">plsY</name>
    <name type="ordered locus">ELI_04795</name>
</gene>
<comment type="function">
    <text evidence="1">Catalyzes the transfer of an acyl group from acyl-phosphate (acyl-PO(4)) to glycerol-3-phosphate (G3P) to form lysophosphatidic acid (LPA). This enzyme utilizes acyl-phosphate as fatty acyl donor, but not acyl-CoA or acyl-ACP.</text>
</comment>
<comment type="catalytic activity">
    <reaction evidence="1">
        <text>an acyl phosphate + sn-glycerol 3-phosphate = a 1-acyl-sn-glycero-3-phosphate + phosphate</text>
        <dbReference type="Rhea" id="RHEA:34075"/>
        <dbReference type="ChEBI" id="CHEBI:43474"/>
        <dbReference type="ChEBI" id="CHEBI:57597"/>
        <dbReference type="ChEBI" id="CHEBI:57970"/>
        <dbReference type="ChEBI" id="CHEBI:59918"/>
        <dbReference type="EC" id="2.3.1.275"/>
    </reaction>
</comment>
<comment type="pathway">
    <text evidence="1">Lipid metabolism; phospholipid metabolism.</text>
</comment>
<comment type="subunit">
    <text evidence="1">Probably interacts with PlsX.</text>
</comment>
<comment type="subcellular location">
    <subcellularLocation>
        <location evidence="1">Cell inner membrane</location>
        <topology evidence="1">Multi-pass membrane protein</topology>
    </subcellularLocation>
</comment>
<comment type="similarity">
    <text evidence="1">Belongs to the PlsY family.</text>
</comment>
<name>PLSY_ERYLH</name>
<feature type="chain" id="PRO_1000064175" description="Glycerol-3-phosphate acyltransferase">
    <location>
        <begin position="1"/>
        <end position="197"/>
    </location>
</feature>
<feature type="transmembrane region" description="Helical" evidence="1">
    <location>
        <begin position="7"/>
        <end position="27"/>
    </location>
</feature>
<feature type="transmembrane region" description="Helical" evidence="1">
    <location>
        <begin position="56"/>
        <end position="76"/>
    </location>
</feature>
<feature type="transmembrane region" description="Helical" evidence="1">
    <location>
        <begin position="82"/>
        <end position="102"/>
    </location>
</feature>
<feature type="transmembrane region" description="Helical" evidence="1">
    <location>
        <begin position="116"/>
        <end position="136"/>
    </location>
</feature>
<feature type="transmembrane region" description="Helical" evidence="1">
    <location>
        <begin position="157"/>
        <end position="177"/>
    </location>
</feature>
<reference key="1">
    <citation type="journal article" date="2009" name="J. Bacteriol.">
        <title>Complete genome sequence of Erythrobacter litoralis HTCC2594.</title>
        <authorList>
            <person name="Oh H.M."/>
            <person name="Giovannoni S.J."/>
            <person name="Ferriera S."/>
            <person name="Johnson J."/>
            <person name="Cho J.C."/>
        </authorList>
    </citation>
    <scope>NUCLEOTIDE SEQUENCE [LARGE SCALE GENOMIC DNA]</scope>
    <source>
        <strain>HTCC2594</strain>
    </source>
</reference>
<protein>
    <recommendedName>
        <fullName evidence="1">Glycerol-3-phosphate acyltransferase</fullName>
    </recommendedName>
    <alternativeName>
        <fullName evidence="1">Acyl-PO4 G3P acyltransferase</fullName>
    </alternativeName>
    <alternativeName>
        <fullName evidence="1">Acyl-phosphate--glycerol-3-phosphate acyltransferase</fullName>
    </alternativeName>
    <alternativeName>
        <fullName evidence="1">G3P acyltransferase</fullName>
        <shortName evidence="1">GPAT</shortName>
        <ecNumber evidence="1">2.3.1.275</ecNumber>
    </alternativeName>
    <alternativeName>
        <fullName evidence="1">Lysophosphatidic acid synthase</fullName>
        <shortName evidence="1">LPA synthase</shortName>
    </alternativeName>
</protein>
<evidence type="ECO:0000255" key="1">
    <source>
        <dbReference type="HAMAP-Rule" id="MF_01043"/>
    </source>
</evidence>
<sequence length="197" mass="20915">MDYNLDPSIAALIGYAFGSIPFGLLLTRMAGMGDVRSIGSGNIGATNVLRTGNKGLAALTLVLDLVKGFVPVWIAWRYFQNDIGWAALGAVVGHCFPIWLGFKGGKGVATNAGVCFGLGWGIGLAYAFVWLVMLAITRISSVAGMSAVVAAAGAAWYFGRPTFVPPLVIIAVIIIWLHRANIRRLLRGEEPRVGNKP</sequence>
<organism>
    <name type="scientific">Erythrobacter litoralis (strain HTCC2594)</name>
    <dbReference type="NCBI Taxonomy" id="314225"/>
    <lineage>
        <taxon>Bacteria</taxon>
        <taxon>Pseudomonadati</taxon>
        <taxon>Pseudomonadota</taxon>
        <taxon>Alphaproteobacteria</taxon>
        <taxon>Sphingomonadales</taxon>
        <taxon>Erythrobacteraceae</taxon>
        <taxon>Erythrobacter/Porphyrobacter group</taxon>
        <taxon>Erythrobacter</taxon>
    </lineage>
</organism>